<keyword id="KW-0158">Chromosome</keyword>
<keyword id="KW-0238">DNA-binding</keyword>
<keyword id="KW-0539">Nucleus</keyword>
<keyword id="KW-1185">Reference proteome</keyword>
<keyword id="KW-0804">Transcription</keyword>
<keyword id="KW-0805">Transcription regulation</keyword>
<protein>
    <recommendedName>
        <fullName evidence="6">Homeobox-like protein HDP1</fullName>
    </recommendedName>
    <alternativeName>
        <fullName evidence="4">Early gametocyte enriched phosphoprotein EGXP</fullName>
        <shortName evidence="4">PfsEGXP</shortName>
    </alternativeName>
    <alternativeName>
        <fullName evidence="5">Homeodomain protein 1</fullName>
    </alternativeName>
</protein>
<organism evidence="9">
    <name type="scientific">Plasmodium falciparum (isolate NF54)</name>
    <dbReference type="NCBI Taxonomy" id="5843"/>
    <lineage>
        <taxon>Eukaryota</taxon>
        <taxon>Sar</taxon>
        <taxon>Alveolata</taxon>
        <taxon>Apicomplexa</taxon>
        <taxon>Aconoidasida</taxon>
        <taxon>Haemosporida</taxon>
        <taxon>Plasmodiidae</taxon>
        <taxon>Plasmodium</taxon>
        <taxon>Plasmodium (Laverania)</taxon>
    </lineage>
</organism>
<gene>
    <name evidence="5" type="primary">HDP1</name>
    <name evidence="7" type="ORF">CK202_0459</name>
    <name type="ORF">PfNF54_140069800</name>
</gene>
<accession>A0A2I0C2C6</accession>
<accession>W7K5M7</accession>
<reference evidence="9" key="1">
    <citation type="submission" date="2017-11" db="EMBL/GenBank/DDBJ databases">
        <title>Plasmodium falciparum NF54 genome assembly.</title>
        <authorList>
            <person name="Bryant J.M."/>
            <person name="Baumgarten S."/>
            <person name="Scheidig-Benatar C."/>
            <person name="Scherf A."/>
        </authorList>
    </citation>
    <scope>NUCLEOTIDE SEQUENCE [LARGE SCALE GENOMIC DNA]</scope>
    <source>
        <strain evidence="9">NF54</strain>
    </source>
</reference>
<reference evidence="8" key="2">
    <citation type="submission" date="2013-02" db="EMBL/GenBank/DDBJ databases">
        <title>The Genome Sequence of Plasmodium falciparum NF54.</title>
        <authorList>
            <consortium name="The Broad Institute Genome Sequencing Platform"/>
            <consortium name="The Broad Institute Genome Sequencing Center for Infectious Disease"/>
            <person name="Neafsey D."/>
            <person name="Cheeseman I."/>
            <person name="Volkman S."/>
            <person name="Adams J."/>
            <person name="Walker B."/>
            <person name="Young S.K."/>
            <person name="Zeng Q."/>
            <person name="Gargeya S."/>
            <person name="Fitzgerald M."/>
            <person name="Haas B."/>
            <person name="Abouelleil A."/>
            <person name="Alvarado L."/>
            <person name="Arachchi H.M."/>
            <person name="Berlin A.M."/>
            <person name="Chapman S.B."/>
            <person name="Dewar J."/>
            <person name="Goldberg J."/>
            <person name="Griggs A."/>
            <person name="Gujja S."/>
            <person name="Hansen M."/>
            <person name="Howarth C."/>
            <person name="Imamovic A."/>
            <person name="Larimer J."/>
            <person name="McCowan C."/>
            <person name="Murphy C."/>
            <person name="Neiman D."/>
            <person name="Pearson M."/>
            <person name="Priest M."/>
            <person name="Roberts A."/>
            <person name="Saif S."/>
            <person name="Shea T."/>
            <person name="Sisk P."/>
            <person name="Sykes S."/>
            <person name="Wortman J."/>
            <person name="Nusbaum C."/>
            <person name="Birren B."/>
        </authorList>
    </citation>
    <scope>NUCLEOTIDE SEQUENCE [LARGE SCALE GENOMIC DNA] OF 1874-3078</scope>
    <source>
        <strain evidence="8">NF54</strain>
    </source>
</reference>
<reference evidence="6" key="3">
    <citation type="journal article" date="2018" name="J. Infect. Dis.">
        <title>Antibodies to PfsEGXP, an Early Gametocyte-Enriched Phosphoprotein, Predict Decreased Plasmodium falciparum Gametocyte Density in Humans.</title>
        <authorList>
            <person name="Nixon C.P."/>
            <person name="Nixon C.E."/>
            <person name="Michelow I.C."/>
            <person name="Silva-Viera R.A."/>
            <person name="Colantuono B."/>
            <person name="Obeidallah A.S."/>
            <person name="Jha A."/>
            <person name="Dockery D."/>
            <person name="Raj D."/>
            <person name="Park S."/>
            <person name="Duffy P.E."/>
            <person name="Kurtis J.D."/>
        </authorList>
    </citation>
    <scope>DEVELOPMENTAL STAGE</scope>
</reference>
<reference evidence="6" key="4">
    <citation type="journal article" date="2022" name="Nat. Microbiol.">
        <title>The transcriptional regulator HDP1 controls expansion of the inner membrane complex during early sexual differentiation of malaria parasites.</title>
        <authorList>
            <person name="Campelo Morillo R.A."/>
            <person name="Tong X."/>
            <person name="Xie W."/>
            <person name="Abel S."/>
            <person name="Orchard L.M."/>
            <person name="Daher W."/>
            <person name="Patel D.J."/>
            <person name="Llinas M."/>
            <person name="Le Roch K.G."/>
            <person name="Kafsack B.F.C."/>
        </authorList>
    </citation>
    <scope>FUNCTION</scope>
    <scope>SUBUNIT</scope>
    <scope>SUBCELLULAR LOCATION</scope>
    <scope>DEVELOPMENTAL STAGE</scope>
    <scope>DISRUPTION PHENOTYPE</scope>
</reference>
<name>HDP1_PLAFO</name>
<evidence type="ECO:0000256" key="1">
    <source>
        <dbReference type="SAM" id="MobiDB-lite"/>
    </source>
</evidence>
<evidence type="ECO:0000269" key="2">
    <source>
    </source>
</evidence>
<evidence type="ECO:0000269" key="3">
    <source>
    </source>
</evidence>
<evidence type="ECO:0000303" key="4">
    <source>
    </source>
</evidence>
<evidence type="ECO:0000303" key="5">
    <source>
    </source>
</evidence>
<evidence type="ECO:0000305" key="6"/>
<evidence type="ECO:0000312" key="7">
    <source>
        <dbReference type="EMBL" id="PKC49732.1"/>
    </source>
</evidence>
<evidence type="ECO:0000312" key="8">
    <source>
        <dbReference type="Proteomes" id="UP000030673"/>
    </source>
</evidence>
<evidence type="ECO:0000312" key="9">
    <source>
        <dbReference type="Proteomes" id="UP000232684"/>
    </source>
</evidence>
<feature type="chain" id="PRO_0000456836" description="Homeobox-like protein HDP1">
    <location>
        <begin position="1"/>
        <end position="3078"/>
    </location>
</feature>
<feature type="region of interest" description="Disordered" evidence="1">
    <location>
        <begin position="1"/>
        <end position="29"/>
    </location>
</feature>
<feature type="region of interest" description="Disordered" evidence="1">
    <location>
        <begin position="59"/>
        <end position="164"/>
    </location>
</feature>
<feature type="region of interest" description="Disordered" evidence="1">
    <location>
        <begin position="203"/>
        <end position="306"/>
    </location>
</feature>
<feature type="region of interest" description="Disordered" evidence="1">
    <location>
        <begin position="949"/>
        <end position="980"/>
    </location>
</feature>
<feature type="region of interest" description="Disordered" evidence="1">
    <location>
        <begin position="1323"/>
        <end position="1390"/>
    </location>
</feature>
<feature type="region of interest" description="Disordered" evidence="1">
    <location>
        <begin position="1415"/>
        <end position="1445"/>
    </location>
</feature>
<feature type="region of interest" description="Disordered" evidence="1">
    <location>
        <begin position="1939"/>
        <end position="2046"/>
    </location>
</feature>
<feature type="region of interest" description="Disordered" evidence="1">
    <location>
        <begin position="2115"/>
        <end position="2216"/>
    </location>
</feature>
<feature type="region of interest" description="Disordered" evidence="1">
    <location>
        <begin position="2599"/>
        <end position="2637"/>
    </location>
</feature>
<feature type="region of interest" description="Disordered" evidence="1">
    <location>
        <begin position="2959"/>
        <end position="3019"/>
    </location>
</feature>
<feature type="region of interest" description="DNA-binding" evidence="3">
    <location>
        <begin position="2991"/>
        <end position="3078"/>
    </location>
</feature>
<feature type="compositionally biased region" description="Polar residues" evidence="1">
    <location>
        <begin position="14"/>
        <end position="29"/>
    </location>
</feature>
<feature type="compositionally biased region" description="Basic and acidic residues" evidence="1">
    <location>
        <begin position="59"/>
        <end position="84"/>
    </location>
</feature>
<feature type="compositionally biased region" description="Low complexity" evidence="1">
    <location>
        <begin position="85"/>
        <end position="94"/>
    </location>
</feature>
<feature type="compositionally biased region" description="Low complexity" evidence="1">
    <location>
        <begin position="114"/>
        <end position="127"/>
    </location>
</feature>
<feature type="compositionally biased region" description="Polar residues" evidence="1">
    <location>
        <begin position="128"/>
        <end position="137"/>
    </location>
</feature>
<feature type="compositionally biased region" description="Polar residues" evidence="1">
    <location>
        <begin position="148"/>
        <end position="157"/>
    </location>
</feature>
<feature type="compositionally biased region" description="Polar residues" evidence="1">
    <location>
        <begin position="209"/>
        <end position="229"/>
    </location>
</feature>
<feature type="compositionally biased region" description="Polar residues" evidence="1">
    <location>
        <begin position="237"/>
        <end position="252"/>
    </location>
</feature>
<feature type="compositionally biased region" description="Polar residues" evidence="1">
    <location>
        <begin position="949"/>
        <end position="960"/>
    </location>
</feature>
<feature type="compositionally biased region" description="Basic residues" evidence="1">
    <location>
        <begin position="1368"/>
        <end position="1380"/>
    </location>
</feature>
<feature type="compositionally biased region" description="Low complexity" evidence="1">
    <location>
        <begin position="1415"/>
        <end position="1433"/>
    </location>
</feature>
<feature type="compositionally biased region" description="Polar residues" evidence="1">
    <location>
        <begin position="1434"/>
        <end position="1445"/>
    </location>
</feature>
<feature type="compositionally biased region" description="Low complexity" evidence="1">
    <location>
        <begin position="1939"/>
        <end position="1993"/>
    </location>
</feature>
<feature type="compositionally biased region" description="Basic and acidic residues" evidence="1">
    <location>
        <begin position="2012"/>
        <end position="2021"/>
    </location>
</feature>
<feature type="compositionally biased region" description="Basic and acidic residues" evidence="1">
    <location>
        <begin position="2029"/>
        <end position="2046"/>
    </location>
</feature>
<feature type="compositionally biased region" description="Polar residues" evidence="1">
    <location>
        <begin position="2115"/>
        <end position="2126"/>
    </location>
</feature>
<feature type="compositionally biased region" description="Low complexity" evidence="1">
    <location>
        <begin position="2139"/>
        <end position="2160"/>
    </location>
</feature>
<feature type="compositionally biased region" description="Basic and acidic residues" evidence="1">
    <location>
        <begin position="2163"/>
        <end position="2177"/>
    </location>
</feature>
<feature type="compositionally biased region" description="Acidic residues" evidence="1">
    <location>
        <begin position="2192"/>
        <end position="2201"/>
    </location>
</feature>
<feature type="compositionally biased region" description="Low complexity" evidence="1">
    <location>
        <begin position="2202"/>
        <end position="2216"/>
    </location>
</feature>
<feature type="compositionally biased region" description="Low complexity" evidence="1">
    <location>
        <begin position="2602"/>
        <end position="2630"/>
    </location>
</feature>
<feature type="compositionally biased region" description="Low complexity" evidence="1">
    <location>
        <begin position="2959"/>
        <end position="2989"/>
    </location>
</feature>
<feature type="compositionally biased region" description="Polar residues" evidence="1">
    <location>
        <begin position="2990"/>
        <end position="3006"/>
    </location>
</feature>
<sequence length="3078" mass="355935">MKRGRRKVDGDGNCPSNGMASSQRNDNSNKNIVRKIYVIEDDNTDSEDKKICKNRRLDLHNSSSRESKDMKLSEEPRHINEKCINDNNKINNNNPEKDIIDLSDSSNDMKHKNNNNNNNNKSHTKNNIFFQTNNPDTSYKIKKDSTTKQENTSSSLHDVSINDNHNEVNNENVLVGGNDSINNGNYINKKTNNLQNVKNTTNSKRKKYNSNNTMPTKKYNNTHQDNNITENREKENTSSIYDNTCNKNNTVHISRGKKNKSSISIHPMRLRNSTVSNCKKENSQGDEEKENENNIPNKRQTRNIGKINVHIEKEERGNQENIQQNDSVINNNIIENKTDDKKPNIANKKSIQKRTNKRMNVETFDICAEQNGNSKKNNSTLVNTNPNDLYDDINVKTDCDWKKYYLSNVISFLNCKYVDLNNYLLSMKYKSVKNIDILDYIHTKYYDNLKYIYFDLHLEKNSSKISSGDLYVILNPILNVTYYSKMIDYCMSCIPSNCRRRITRKRFFNSNATLTDNSNINSIRTDNWYTTHYRNIHESEIFDYQWSIPTEPKGSFYRTVNAYRINRYFMYRNTLVARTINLNATNNVSVFYTINKISYEYNIKISFDNFWNIADPENNYVYYYYFDFDTNQYYTYKITKIGRSGNSNLIKEFLIKMKPTFWCLQDIIIYSSLIFHSTYMRYEKMIHFVTFHDYLQLFVQEHLKQFLELFDALQEPIPKKFLRKIKIYRRLEFSLIFTLCETRKKLHAYSSITRRIDSFLSDYAFFSESQKFRFIYHFYSVRLLGVSPSDLYMKTNKFLSMYDAYVRKNERNADRIPIMFNKFGILLEALIYKCIQYDIINTDIRNNKNEAKNTQNVGNDGNAANFVKSGNVKNAANFVKSGNVKNASNFVKSGNVKNAANFVKSGNVKNASNFVKSGNVKNAANFVKSGNVKNAANFVKSENVGNSRNAEIHESNSPNHNGDKNVDPSDNVTGTKQDENETKNVMQISNILSNCILSEIISNMETMKFPNKYYPWDNKNVFEPFLELLCICKDLSCTNTMCYRSLIRYINVFIQNTILRIFVLRNYKFIDKTRIDYFKIHMLLKLICTFTPCYNSRIVKISCFFMIFIIMNKKINRYKQDYTTDWDNPDFEKLKEKYYPSSDPKKEGLSKPNHMYGVPIEVLRFFIPHYKQCRPEDFIYCPGYKPYENDYYNVDGTVRIIRDHMRYSFYVENICSKKMRHKRRNISAFNKILYKNFKSIKKQFTMFHRPNMLNLSYDWDSFQKDIMVLVNQILTSYEWHGHGAFESFVSIWRFKKRYSKSYTSTKSVEENFRNIEEDLADLDEDSTENINEPNHLDGQNNKNNRKTNNDNTLKQNHRKSRGTSVQGRKNKINRGSKGKHNSINIPKDRKTNIMSQINKFIFNKKDIKIKCEESSSSNYEEGNSSSNEENNISTDKNISNTNNKNGVSLYDNSKVYLKGDYKFSKQFHKYIHKNLLDNVDKTDRTINIISKFFGGVNKSNNVNNINSVNKENNMNKVNAVHKINAVDKVNAVNKVNSVNKLNVVNKTNVLSKLNAVYKVNSVHKMNAVNKVNAVNKVNAVNKVNVVNKKDILNKLNALYKMNAVYKMNALNKVSAVNKVSAVNKMGAVNKVCAVNRVNGVNKVNEVNEVNEVNMVNEVNELNEVNNVNAVNEVNSVNEVNEMNEVNKVNELNEVNEVNNVNEVNNVNEMNNVNEMNNMNEMNNVNVVNEVNNVNEVNNVNEMNNVNEMNNMNEMNNVNVVNEVNNVNEMNNTNELNEVNEVNNVNEVNDVNVVNEVNNVNEMNNMNELNEVNGVNEVHNTNEINEMNNVNVVNEVNNVNEMNNMNELNEVNEVNNVNEVNDVNVVNEVNNVNEMNNMNELNEVNEVNNTNEIHEMNNINEVNNTNEVNNTNEIYEMNNMNDVNNTNEINVVNAVNEVNKVNDSNNSNDANEGNNANYSNDSSNTNNNTSSSTNNSNNNTSCSSQNTTTSSENNDSLENKRNEEDEDEEDDQKDTQKEKNNLEQEDMSPYEDRNKNDEKNINEQDKFHLSNDLGKIYDTYNQGDEVVVSKNKDKLEKHLNDYKSYYYLSKATLMDKIGESQNNNNYNVCNSNELGTNESIKTNSDQNDNVKEKNDSNIFMNNDNYNSSYDNVHNDNDNNMVFKDSSRQDNMEKQKSGENKQYLNNFDNNGNDNDNDNDDNNDNDNNNNNNMNNQYNYQENNINTNYNILYTPSNCQIQNNSYMNTNEMYQPLYNTYPSNAIQENSTINNNIINVSPYMNNDNTTNNTFISGMNSNLSSNISNINNNTYSYDLYSSMNNSYLNNDIQIGNNDINSNTLTNNIVINNYVGNHHMQDSYVTQNTEYTNQISSQTCPNLQYYTHFPNHITNNNYYNVQSGINEVQTQSMSQENNVSHSNEEYMNNNAPNNNVNVYNTYEYNNNQNNKNENINDTNFLNGSSWNNNMINISNVQNSENNEIYCDNIQPNVDNSNRNQNYGISIENNNITDNNLNGSNRTTGNNTYFNNNFMYNSQNDIFAGQGNKTLLDNSNIITTGITSNEYVPNTNYVINNMNNNVYNSLESNYIGNMNNAMNQIGMNSNNVAYMNDNNLSNNNNDNNNDYDNDNNNNNNYSYDNKNDDNILNGINQKESNNVCGTLMSDSDMQRITSNVDFYNNNSSSLYTTAVSGLEFNNNNSNNLYFNNNSITGCNILNNNVENNNKITISNNMIQNEISNETNNNNSFNSMNQNNNFTNFMNINNYHGNTTLLPPQQNIQNNDVHPSNSYGNINMMNNNNSLYSNNSNYYVNSITNDVNYSMINNFNSFHNNTTEYMVPQTTYNNSLGDNGTRTTTYPNVGLNNLNVYQNMYNENNMNNTNNNIFQEYPNNIMPPYNLSNNIGHNSYSYTAYNYTNVVSNLNNNIDISTNIVDTNFNISNSNNYNVEEQTQEIVVEYNNNTDTNFNISQQNNNNNNDNINNINNMNNNNDNNNNSQKNNLSEVQVSNINTPSSYNISARRRRRIGNNGPPSAEELNRLLNIQHLTIPEIATIYGVHRTTIARWCNIRNITSNSMNNSPGKRRKNEDNK</sequence>
<dbReference type="EMBL" id="NYMT01000001">
    <property type="protein sequence ID" value="PKC49732.1"/>
    <property type="molecule type" value="Genomic_DNA"/>
</dbReference>
<dbReference type="EMBL" id="QFXU01000012">
    <property type="protein sequence ID" value="KAF4329078.1"/>
    <property type="molecule type" value="Genomic_DNA"/>
</dbReference>
<dbReference type="EMBL" id="KE123891">
    <property type="protein sequence ID" value="EWC85302.1"/>
    <property type="molecule type" value="Genomic_DNA"/>
</dbReference>
<dbReference type="EnsemblProtists" id="EWC85302">
    <property type="protein sequence ID" value="EWC85302"/>
    <property type="gene ID" value="PFNF54_05779"/>
</dbReference>
<dbReference type="VEuPathDB" id="PlasmoDB:PfNF54_140069800"/>
<dbReference type="Proteomes" id="UP000030673">
    <property type="component" value="Unassembled WGS sequence"/>
</dbReference>
<dbReference type="Proteomes" id="UP000232684">
    <property type="component" value="Unassembled WGS sequence"/>
</dbReference>
<dbReference type="Proteomes" id="UP000754359">
    <property type="component" value="Unassembled WGS sequence"/>
</dbReference>
<dbReference type="GO" id="GO:0005694">
    <property type="term" value="C:chromosome"/>
    <property type="evidence" value="ECO:0007669"/>
    <property type="project" value="UniProtKB-SubCell"/>
</dbReference>
<dbReference type="GO" id="GO:0005634">
    <property type="term" value="C:nucleus"/>
    <property type="evidence" value="ECO:0007669"/>
    <property type="project" value="UniProtKB-SubCell"/>
</dbReference>
<dbReference type="GO" id="GO:0003677">
    <property type="term" value="F:DNA binding"/>
    <property type="evidence" value="ECO:0007669"/>
    <property type="project" value="UniProtKB-KW"/>
</dbReference>
<dbReference type="InterPro" id="IPR053300">
    <property type="entry name" value="Homeobox-like_regulator"/>
</dbReference>
<dbReference type="PANTHER" id="PTHR45795">
    <property type="entry name" value="EARLY GAMETOCYTE ENRICHED PHOSPHOPROTEIN EGXP"/>
    <property type="match status" value="1"/>
</dbReference>
<dbReference type="PANTHER" id="PTHR45795:SF1">
    <property type="entry name" value="MACRO DOMAIN-CONTAINING PROTEIN"/>
    <property type="match status" value="1"/>
</dbReference>
<proteinExistence type="evidence at protein level"/>
<comment type="function">
    <text evidence="3">Transcriptional regulator which binds to the DNA motifs 5'-GTGCACAC-3' (motif A) and 5'-[GTA]TGTA[CT][GA]TAC-3' (motif B) of genes essential for early gametocyte development, including those critical for the expansion of the inner membrane complex (IMC).</text>
</comment>
<comment type="subunit">
    <text evidence="3">Homodimer.</text>
</comment>
<comment type="subcellular location">
    <subcellularLocation>
        <location evidence="3">Nucleus</location>
    </subcellularLocation>
    <subcellularLocation>
        <location evidence="3">Chromosome</location>
    </subcellularLocation>
</comment>
<comment type="developmental stage">
    <text evidence="2 3">Expressed during the early stages of gametocytogenesis; expression begins at stage I-II and reaches maximal levels at stage III that remain steady until stage IV (at protein level) (PubMed:29982707, PubMed:35087229). Not expressed during the asexual blood stage (PubMed:35087229).</text>
</comment>
<comment type="disruption phenotype">
    <text evidence="3">Parasite sexual commitment rates are normal, but they are unable to complete gametocyte development (PubMed:35087229). Gametocytes are arrested at the transition from stage I to stage II failing to elongate from a spherical form into the oblong form and are not viable (PubMed:35087229). In early gametocytes (stage I-II), causes an up-regulation of heterochromatin-associated genes and a reduction of the expression of inner membrane complex (IMC) genes (PubMed:35087229). Loss of IMC component PHIL1 expression resulting in the loss of extension of the IMC during early gametocytogenesis (PubMed:35087229).</text>
</comment>